<sequence>MYVVSTKQMLNNARRGGYAVPAFNIHNLETMQVVVETAASMHAPVIIAGTPGTFTHAGTENLMALVSAMAKQYHHPLAIHLDHHTKFDDIAQKVRSGVRSVMIDASHLPFAQNISRVKEVVDFCHRFDVSVEAELGQLGGQEDDVQVNEADAFYTNPVQAREFAEATGIDSLAVAIGTAHGMYASAPALDFSRLENIRQWVNLPLVLHGASGLSTKDIQQTIKLGICKINVATELKNAFSQALKNYLTEYPEATDPRDYLQSAKSAMRDVVSKVIADCGCEGRA</sequence>
<reference key="1">
    <citation type="journal article" date="2006" name="Proc. Natl. Acad. Sci. U.S.A.">
        <title>Identification of genes subject to positive selection in uropathogenic strains of Escherichia coli: a comparative genomics approach.</title>
        <authorList>
            <person name="Chen S.L."/>
            <person name="Hung C.-S."/>
            <person name="Xu J."/>
            <person name="Reigstad C.S."/>
            <person name="Magrini V."/>
            <person name="Sabo A."/>
            <person name="Blasiar D."/>
            <person name="Bieri T."/>
            <person name="Meyer R.R."/>
            <person name="Ozersky P."/>
            <person name="Armstrong J.R."/>
            <person name="Fulton R.S."/>
            <person name="Latreille J.P."/>
            <person name="Spieth J."/>
            <person name="Hooton T.M."/>
            <person name="Mardis E.R."/>
            <person name="Hultgren S.J."/>
            <person name="Gordon J.I."/>
        </authorList>
    </citation>
    <scope>NUCLEOTIDE SEQUENCE [LARGE SCALE GENOMIC DNA]</scope>
    <source>
        <strain>UTI89 / UPEC</strain>
    </source>
</reference>
<accession>Q1R9X7</accession>
<organism>
    <name type="scientific">Escherichia coli (strain UTI89 / UPEC)</name>
    <dbReference type="NCBI Taxonomy" id="364106"/>
    <lineage>
        <taxon>Bacteria</taxon>
        <taxon>Pseudomonadati</taxon>
        <taxon>Pseudomonadota</taxon>
        <taxon>Gammaproteobacteria</taxon>
        <taxon>Enterobacterales</taxon>
        <taxon>Enterobacteriaceae</taxon>
        <taxon>Escherichia</taxon>
    </lineage>
</organism>
<comment type="function">
    <text evidence="1">Catalytic subunit of the tagatose-1,6-bisphosphate aldolase GatYZ, which catalyzes the reversible aldol condensation of dihydroxyacetone phosphate (DHAP or glycerone-phosphate) with glyceraldehyde 3-phosphate (G3P) to produce tagatose 1,6-bisphosphate (TBP). Requires GatZ subunit for full activity and stability. Is involved in the catabolism of galactitol.</text>
</comment>
<comment type="catalytic activity">
    <reaction evidence="1">
        <text>D-tagatofuranose 1,6-bisphosphate = D-glyceraldehyde 3-phosphate + dihydroxyacetone phosphate</text>
        <dbReference type="Rhea" id="RHEA:22948"/>
        <dbReference type="ChEBI" id="CHEBI:57642"/>
        <dbReference type="ChEBI" id="CHEBI:58694"/>
        <dbReference type="ChEBI" id="CHEBI:59776"/>
        <dbReference type="EC" id="4.1.2.40"/>
    </reaction>
</comment>
<comment type="cofactor">
    <cofactor evidence="1">
        <name>Zn(2+)</name>
        <dbReference type="ChEBI" id="CHEBI:29105"/>
    </cofactor>
    <text evidence="1">Binds 1 zinc ion per subunit.</text>
</comment>
<comment type="pathway">
    <text evidence="1">Carbohydrate metabolism; D-tagatose 6-phosphate degradation; D-glyceraldehyde 3-phosphate and glycerone phosphate from D-tagatose 6-phosphate: step 2/2.</text>
</comment>
<comment type="subunit">
    <text evidence="1">Forms a complex with GatZ.</text>
</comment>
<comment type="similarity">
    <text evidence="1">Belongs to the class II fructose-bisphosphate aldolase family. TagBP aldolase GatY subfamily.</text>
</comment>
<comment type="sequence caution" evidence="2">
    <conflict type="erroneous initiation">
        <sequence resource="EMBL-CDS" id="ABE07837"/>
    </conflict>
</comment>
<proteinExistence type="inferred from homology"/>
<name>GATY_ECOUT</name>
<evidence type="ECO:0000255" key="1">
    <source>
        <dbReference type="HAMAP-Rule" id="MF_01294"/>
    </source>
</evidence>
<evidence type="ECO:0000305" key="2"/>
<feature type="chain" id="PRO_0000355341" description="D-tagatose-1,6-bisphosphate aldolase subunit GatY">
    <location>
        <begin position="1"/>
        <end position="284"/>
    </location>
</feature>
<feature type="active site" description="Proton donor" evidence="1">
    <location>
        <position position="82"/>
    </location>
</feature>
<feature type="binding site" evidence="1">
    <location>
        <position position="83"/>
    </location>
    <ligand>
        <name>Zn(2+)</name>
        <dbReference type="ChEBI" id="CHEBI:29105"/>
        <note>catalytic</note>
    </ligand>
</feature>
<feature type="binding site" evidence="1">
    <location>
        <position position="180"/>
    </location>
    <ligand>
        <name>Zn(2+)</name>
        <dbReference type="ChEBI" id="CHEBI:29105"/>
        <note>catalytic</note>
    </ligand>
</feature>
<feature type="binding site" evidence="1">
    <location>
        <position position="181"/>
    </location>
    <ligand>
        <name>dihydroxyacetone phosphate</name>
        <dbReference type="ChEBI" id="CHEBI:57642"/>
    </ligand>
</feature>
<feature type="binding site" evidence="1">
    <location>
        <position position="208"/>
    </location>
    <ligand>
        <name>Zn(2+)</name>
        <dbReference type="ChEBI" id="CHEBI:29105"/>
        <note>catalytic</note>
    </ligand>
</feature>
<feature type="binding site" evidence="1">
    <location>
        <begin position="209"/>
        <end position="211"/>
    </location>
    <ligand>
        <name>dihydroxyacetone phosphate</name>
        <dbReference type="ChEBI" id="CHEBI:57642"/>
    </ligand>
</feature>
<feature type="binding site" evidence="1">
    <location>
        <begin position="230"/>
        <end position="233"/>
    </location>
    <ligand>
        <name>dihydroxyacetone phosphate</name>
        <dbReference type="ChEBI" id="CHEBI:57642"/>
    </ligand>
</feature>
<protein>
    <recommendedName>
        <fullName evidence="1">D-tagatose-1,6-bisphosphate aldolase subunit GatY</fullName>
        <shortName evidence="1">TBPA</shortName>
        <shortName evidence="1">TagBP aldolase</shortName>
        <ecNumber evidence="1">4.1.2.40</ecNumber>
    </recommendedName>
    <alternativeName>
        <fullName evidence="1">D-tagatose-bisphosphate aldolase class II</fullName>
    </alternativeName>
    <alternativeName>
        <fullName evidence="1">Tagatose-bisphosphate aldolase</fullName>
    </alternativeName>
</protein>
<keyword id="KW-0298">Galactitol metabolism</keyword>
<keyword id="KW-0456">Lyase</keyword>
<keyword id="KW-0479">Metal-binding</keyword>
<keyword id="KW-0862">Zinc</keyword>
<dbReference type="EC" id="4.1.2.40" evidence="1"/>
<dbReference type="EMBL" id="CP000243">
    <property type="protein sequence ID" value="ABE07837.1"/>
    <property type="status" value="ALT_INIT"/>
    <property type="molecule type" value="Genomic_DNA"/>
</dbReference>
<dbReference type="RefSeq" id="WP_000289810.1">
    <property type="nucleotide sequence ID" value="NZ_CP064825.1"/>
</dbReference>
<dbReference type="SMR" id="Q1R9X7"/>
<dbReference type="KEGG" id="eci:UTI89_C2369"/>
<dbReference type="HOGENOM" id="CLU_040088_0_1_6"/>
<dbReference type="UniPathway" id="UPA00704">
    <property type="reaction ID" value="UER00716"/>
</dbReference>
<dbReference type="Proteomes" id="UP000001952">
    <property type="component" value="Chromosome"/>
</dbReference>
<dbReference type="GO" id="GO:0005829">
    <property type="term" value="C:cytosol"/>
    <property type="evidence" value="ECO:0007669"/>
    <property type="project" value="TreeGrafter"/>
</dbReference>
<dbReference type="GO" id="GO:0009025">
    <property type="term" value="F:tagatose-bisphosphate aldolase activity"/>
    <property type="evidence" value="ECO:0007669"/>
    <property type="project" value="UniProtKB-UniRule"/>
</dbReference>
<dbReference type="GO" id="GO:0008270">
    <property type="term" value="F:zinc ion binding"/>
    <property type="evidence" value="ECO:0007669"/>
    <property type="project" value="UniProtKB-UniRule"/>
</dbReference>
<dbReference type="GO" id="GO:2001059">
    <property type="term" value="P:D-tagatose 6-phosphate catabolic process"/>
    <property type="evidence" value="ECO:0007669"/>
    <property type="project" value="UniProtKB-UniRule"/>
</dbReference>
<dbReference type="GO" id="GO:0019404">
    <property type="term" value="P:galactitol catabolic process"/>
    <property type="evidence" value="ECO:0007669"/>
    <property type="project" value="InterPro"/>
</dbReference>
<dbReference type="CDD" id="cd00947">
    <property type="entry name" value="TBP_aldolase_IIB"/>
    <property type="match status" value="1"/>
</dbReference>
<dbReference type="FunFam" id="3.20.20.70:FF:000043">
    <property type="entry name" value="D-tagatose-1,6-bisphosphate aldolase subunit GatY"/>
    <property type="match status" value="1"/>
</dbReference>
<dbReference type="Gene3D" id="3.20.20.70">
    <property type="entry name" value="Aldolase class I"/>
    <property type="match status" value="1"/>
</dbReference>
<dbReference type="HAMAP" id="MF_01294">
    <property type="entry name" value="TagBP_aldolase_GatY"/>
    <property type="match status" value="1"/>
</dbReference>
<dbReference type="InterPro" id="IPR013785">
    <property type="entry name" value="Aldolase_TIM"/>
</dbReference>
<dbReference type="InterPro" id="IPR050246">
    <property type="entry name" value="Class_II_FBP_aldolase"/>
</dbReference>
<dbReference type="InterPro" id="IPR000771">
    <property type="entry name" value="FBA_II"/>
</dbReference>
<dbReference type="InterPro" id="IPR011288">
    <property type="entry name" value="TagBP_ald_KbaY/GatY"/>
</dbReference>
<dbReference type="InterPro" id="IPR023955">
    <property type="entry name" value="TagBP_aldolase_GatY"/>
</dbReference>
<dbReference type="NCBIfam" id="TIGR00167">
    <property type="entry name" value="cbbA"/>
    <property type="match status" value="1"/>
</dbReference>
<dbReference type="NCBIfam" id="NF006626">
    <property type="entry name" value="PRK09195.1"/>
    <property type="match status" value="1"/>
</dbReference>
<dbReference type="NCBIfam" id="NF009374">
    <property type="entry name" value="PRK12737.1"/>
    <property type="match status" value="1"/>
</dbReference>
<dbReference type="NCBIfam" id="TIGR01858">
    <property type="entry name" value="tag_bisphos_ald"/>
    <property type="match status" value="1"/>
</dbReference>
<dbReference type="PANTHER" id="PTHR30304">
    <property type="entry name" value="D-TAGATOSE-1,6-BISPHOSPHATE ALDOLASE"/>
    <property type="match status" value="1"/>
</dbReference>
<dbReference type="PANTHER" id="PTHR30304:SF0">
    <property type="entry name" value="D-TAGATOSE-1,6-BISPHOSPHATE ALDOLASE SUBUNIT GATY-RELATED"/>
    <property type="match status" value="1"/>
</dbReference>
<dbReference type="Pfam" id="PF01116">
    <property type="entry name" value="F_bP_aldolase"/>
    <property type="match status" value="1"/>
</dbReference>
<dbReference type="PIRSF" id="PIRSF001359">
    <property type="entry name" value="F_bP_aldolase_II"/>
    <property type="match status" value="1"/>
</dbReference>
<dbReference type="SUPFAM" id="SSF51569">
    <property type="entry name" value="Aldolase"/>
    <property type="match status" value="1"/>
</dbReference>
<dbReference type="PROSITE" id="PS00602">
    <property type="entry name" value="ALDOLASE_CLASS_II_1"/>
    <property type="match status" value="1"/>
</dbReference>
<dbReference type="PROSITE" id="PS00806">
    <property type="entry name" value="ALDOLASE_CLASS_II_2"/>
    <property type="match status" value="1"/>
</dbReference>
<gene>
    <name evidence="1" type="primary">gatY</name>
    <name type="ordered locus">UTI89_C2369</name>
</gene>